<accession>Q99Y92</accession>
<accession>Q9APG4</accession>
<sequence>MDKHLLVKRTLGCVCAATLMGAALATHHDSLNTVKAEEKTVQVQKGLPSIDSLHYLSENSKKEFKEELSKAGQESQKVKEILAKAQQADKQAQELAKMKIPEKIPMKPLHGSLYGGYFRTWHDKTSDPTEKDKVNSMGELPKEVDLAFIFHDWTKDYSLFWKELATKHVPKLNKQGTRVIRTIPWRFLAGGDNSGIAEDTSKYPNTPEGNKALAKAIVDEYVYKYNLDGLDVDVEHDSIPKVDKKEDTAGVERSIQVFEEIGKLIGPKGVDKSRLFIMDSTYMADKNPLIERGAPYINLLLVQVYGSQGEKGGWEPVSNRPEKTMEERWQGYSKYIRPEQYMIGFSFYEENAQEGNLWYDINSRKDEDKANGINTDITGTRAERYARWQPKTGGVKGGIFSYAIDRDGVAHQPKKYAKQKEFKDATDNIFHSDYSVSKALKTVMLKDKSYDLIDEKDFPDKALREAVMAQVGTRKGDLERFNGTLRLDNPAIQSLEGLNKFKKLAQLDLIGLSRITKLDRSVLPANMKPGKDTLETVLETYKKDNKEEPATIPPVSLKVSGLTGLKELDLSGFDRETLAGLDAATLTSLEKVDISGNKLDLAPGTENRQIFDTMLSTISNHVGSNEQTVKFDKQKPTGHYPDTYGKTSLRLPVANEKVDLQSQLLFGTVTNQGTLINSEADYKAYQNHKIAGRSFVDSNYHYNNFKVSYENYTVKVTDSTLGTTTDKTLATDKEETYKVDFFSPADKTKAVHTAKVIVGDEKTMMVNLAEGATVIGGSADPVNARKVFDGQLGSETDNISLGWDSKQSIIFKLKEDGLIKHWRFFNDSARNPETTNKPIQEASLQIFNIKDYNLDNLLENPNKFDDEKYWITVDTYSAQGERATAFSNTLNNITSKYWRVVFDTKGDRYSSPVVPELQILGYPLPNADTIMKTVTTAKELSQQKDKFSQKMLDELKIKEMALETSLNSKIFDVTAINANAGVLKDCIEKRQLLKK</sequence>
<dbReference type="EC" id="3.2.1.96" evidence="4 7 13 16"/>
<dbReference type="EMBL" id="AF296340">
    <property type="protein sequence ID" value="AAK00850.1"/>
    <property type="molecule type" value="Genomic_DNA"/>
</dbReference>
<dbReference type="EMBL" id="AE004092">
    <property type="protein sequence ID" value="AAK34539.1"/>
    <property type="molecule type" value="Genomic_DNA"/>
</dbReference>
<dbReference type="RefSeq" id="NP_269818.1">
    <property type="nucleotide sequence ID" value="NC_002737.2"/>
</dbReference>
<dbReference type="PDB" id="4NUY">
    <property type="method" value="X-ray"/>
    <property type="resolution" value="2.61 A"/>
    <property type="chains" value="A=98-995"/>
</dbReference>
<dbReference type="PDB" id="4NUZ">
    <property type="method" value="X-ray"/>
    <property type="resolution" value="1.91 A"/>
    <property type="chains" value="A=98-995"/>
</dbReference>
<dbReference type="PDB" id="6EN3">
    <property type="method" value="X-ray"/>
    <property type="resolution" value="2.90 A"/>
    <property type="chains" value="A=37-995"/>
</dbReference>
<dbReference type="PDB" id="8A49">
    <property type="method" value="X-ray"/>
    <property type="resolution" value="3.45 A"/>
    <property type="chains" value="C/D=100-995"/>
</dbReference>
<dbReference type="PDB" id="8A64">
    <property type="method" value="EM"/>
    <property type="resolution" value="4.60 A"/>
    <property type="chains" value="A=37-995"/>
</dbReference>
<dbReference type="PDBsum" id="4NUY"/>
<dbReference type="PDBsum" id="4NUZ"/>
<dbReference type="PDBsum" id="6EN3"/>
<dbReference type="PDBsum" id="8A49"/>
<dbReference type="PDBsum" id="8A64"/>
<dbReference type="SMR" id="Q99Y92"/>
<dbReference type="CAZy" id="GH18">
    <property type="family name" value="Glycoside Hydrolase Family 18"/>
</dbReference>
<dbReference type="PaxDb" id="1314-HKU360_01591"/>
<dbReference type="KEGG" id="spy:SPy_1813"/>
<dbReference type="PATRIC" id="fig|160490.10.peg.1575"/>
<dbReference type="HOGENOM" id="CLU_297332_0_0_9"/>
<dbReference type="OMA" id="AKYWRIT"/>
<dbReference type="EvolutionaryTrace" id="Q99Y92"/>
<dbReference type="Proteomes" id="UP000000750">
    <property type="component" value="Chromosome"/>
</dbReference>
<dbReference type="GO" id="GO:0005576">
    <property type="term" value="C:extracellular region"/>
    <property type="evidence" value="ECO:0007669"/>
    <property type="project" value="UniProtKB-SubCell"/>
</dbReference>
<dbReference type="GO" id="GO:0043655">
    <property type="term" value="C:host extracellular space"/>
    <property type="evidence" value="ECO:0000314"/>
    <property type="project" value="UniProtKB"/>
</dbReference>
<dbReference type="GO" id="GO:0005509">
    <property type="term" value="F:calcium ion binding"/>
    <property type="evidence" value="ECO:0000314"/>
    <property type="project" value="UniProtKB"/>
</dbReference>
<dbReference type="GO" id="GO:0033925">
    <property type="term" value="F:mannosyl-glycoprotein endo-beta-N-acetylglucosaminidase activity"/>
    <property type="evidence" value="ECO:0000314"/>
    <property type="project" value="UniProtKB"/>
</dbReference>
<dbReference type="GO" id="GO:0090729">
    <property type="term" value="F:toxin activity"/>
    <property type="evidence" value="ECO:0000314"/>
    <property type="project" value="UniProtKB"/>
</dbReference>
<dbReference type="GO" id="GO:0005975">
    <property type="term" value="P:carbohydrate metabolic process"/>
    <property type="evidence" value="ECO:0007669"/>
    <property type="project" value="InterPro"/>
</dbReference>
<dbReference type="GO" id="GO:0042783">
    <property type="term" value="P:symbiont-mediated evasion of host immune response"/>
    <property type="evidence" value="ECO:0000314"/>
    <property type="project" value="UniProtKB"/>
</dbReference>
<dbReference type="CDD" id="cd06542">
    <property type="entry name" value="GH18_EndoS-like"/>
    <property type="match status" value="1"/>
</dbReference>
<dbReference type="Gene3D" id="3.20.20.80">
    <property type="entry name" value="Glycosidases"/>
    <property type="match status" value="1"/>
</dbReference>
<dbReference type="Gene3D" id="3.80.10.10">
    <property type="entry name" value="Ribonuclease Inhibitor"/>
    <property type="match status" value="1"/>
</dbReference>
<dbReference type="InterPro" id="IPR049410">
    <property type="entry name" value="EndoS-like_Ig-like"/>
</dbReference>
<dbReference type="InterPro" id="IPR057016">
    <property type="entry name" value="EndoS_F2-like_TIM-barrel"/>
</dbReference>
<dbReference type="InterPro" id="IPR055024">
    <property type="entry name" value="EndoS_helical"/>
</dbReference>
<dbReference type="InterPro" id="IPR001579">
    <property type="entry name" value="Glyco_hydro_18_chit_AS"/>
</dbReference>
<dbReference type="InterPro" id="IPR017853">
    <property type="entry name" value="Glycoside_hydrolase_SF"/>
</dbReference>
<dbReference type="InterPro" id="IPR032675">
    <property type="entry name" value="LRR_dom_sf"/>
</dbReference>
<dbReference type="Pfam" id="PF22382">
    <property type="entry name" value="EndoS_helical"/>
    <property type="match status" value="1"/>
</dbReference>
<dbReference type="Pfam" id="PF20746">
    <property type="entry name" value="EndoS_Ig-like"/>
    <property type="match status" value="1"/>
</dbReference>
<dbReference type="Pfam" id="PF23952">
    <property type="entry name" value="LRR_EndoS"/>
    <property type="match status" value="1"/>
</dbReference>
<dbReference type="Pfam" id="PF23916">
    <property type="entry name" value="TIM-barrel_EndoS"/>
    <property type="match status" value="1"/>
</dbReference>
<dbReference type="SUPFAM" id="SSF51445">
    <property type="entry name" value="(Trans)glycosidases"/>
    <property type="match status" value="1"/>
</dbReference>
<dbReference type="PROSITE" id="PS01095">
    <property type="entry name" value="GH18_1"/>
    <property type="match status" value="1"/>
</dbReference>
<evidence type="ECO:0000255" key="1"/>
<evidence type="ECO:0000255" key="2">
    <source>
        <dbReference type="PROSITE-ProRule" id="PRU01258"/>
    </source>
</evidence>
<evidence type="ECO:0000255" key="3">
    <source>
        <dbReference type="PROSITE-ProRule" id="PRU10053"/>
    </source>
</evidence>
<evidence type="ECO:0000269" key="4">
    <source>
    </source>
</evidence>
<evidence type="ECO:0000269" key="5">
    <source>
    </source>
</evidence>
<evidence type="ECO:0000269" key="6">
    <source>
    </source>
</evidence>
<evidence type="ECO:0000269" key="7">
    <source>
    </source>
</evidence>
<evidence type="ECO:0000269" key="8">
    <source>
    </source>
</evidence>
<evidence type="ECO:0000269" key="9">
    <source>
    </source>
</evidence>
<evidence type="ECO:0000269" key="10">
    <source>
    </source>
</evidence>
<evidence type="ECO:0000269" key="11">
    <source>
    </source>
</evidence>
<evidence type="ECO:0000269" key="12">
    <source>
    </source>
</evidence>
<evidence type="ECO:0000269" key="13">
    <source>
    </source>
</evidence>
<evidence type="ECO:0000269" key="14">
    <source>
    </source>
</evidence>
<evidence type="ECO:0000269" key="15">
    <source>
    </source>
</evidence>
<evidence type="ECO:0000269" key="16">
    <source>
    </source>
</evidence>
<evidence type="ECO:0000269" key="17">
    <source>
    </source>
</evidence>
<evidence type="ECO:0000269" key="18">
    <source>
    </source>
</evidence>
<evidence type="ECO:0000303" key="19">
    <source>
    </source>
</evidence>
<evidence type="ECO:0000305" key="20"/>
<evidence type="ECO:0000305" key="21">
    <source>
    </source>
</evidence>
<evidence type="ECO:0000305" key="22">
    <source>
    </source>
</evidence>
<evidence type="ECO:0000305" key="23">
    <source>
    </source>
</evidence>
<evidence type="ECO:0000312" key="24">
    <source>
        <dbReference type="EMBL" id="AAK34539.1"/>
    </source>
</evidence>
<evidence type="ECO:0007744" key="25">
    <source>
        <dbReference type="PDB" id="4NUY"/>
    </source>
</evidence>
<evidence type="ECO:0007744" key="26">
    <source>
        <dbReference type="PDB" id="4NUZ"/>
    </source>
</evidence>
<evidence type="ECO:0007744" key="27">
    <source>
        <dbReference type="PDB" id="6EN3"/>
    </source>
</evidence>
<evidence type="ECO:0007829" key="28">
    <source>
        <dbReference type="PDB" id="4NUY"/>
    </source>
</evidence>
<evidence type="ECO:0007829" key="29">
    <source>
        <dbReference type="PDB" id="8A49"/>
    </source>
</evidence>
<proteinExistence type="evidence at protein level"/>
<reference key="1">
    <citation type="journal article" date="2001" name="EMBO J.">
        <title>EndoS, a novel secreted protein from Streptococcus pyogenes with endoglycosidase activity on human IgG.</title>
        <authorList>
            <person name="Collin M."/>
            <person name="Olsen A."/>
        </authorList>
    </citation>
    <scope>NUCLEOTIDE SEQUENCE [GENOMIC DNA]</scope>
    <source>
        <strain>AP1 / 40/58 / Serotype M1</strain>
    </source>
</reference>
<reference key="2">
    <citation type="journal article" date="2001" name="Proc. Natl. Acad. Sci. U.S.A.">
        <title>Complete genome sequence of an M1 strain of Streptococcus pyogenes.</title>
        <authorList>
            <person name="Ferretti J.J."/>
            <person name="McShan W.M."/>
            <person name="Ajdic D.J."/>
            <person name="Savic D.J."/>
            <person name="Savic G."/>
            <person name="Lyon K."/>
            <person name="Primeaux C."/>
            <person name="Sezate S."/>
            <person name="Suvorov A.N."/>
            <person name="Kenton S."/>
            <person name="Lai H.S."/>
            <person name="Lin S.P."/>
            <person name="Qian Y."/>
            <person name="Jia H.G."/>
            <person name="Najar F.Z."/>
            <person name="Ren Q."/>
            <person name="Zhu H."/>
            <person name="Song L."/>
            <person name="White J."/>
            <person name="Yuan X."/>
            <person name="Clifton S.W."/>
            <person name="Roe B.A."/>
            <person name="McLaughlin R.E."/>
        </authorList>
    </citation>
    <scope>NUCLEOTIDE SEQUENCE [LARGE SCALE GENOMIC DNA]</scope>
    <source>
        <strain>ATCC 700294 / SF370 / Serotype M1</strain>
    </source>
</reference>
<reference key="3">
    <citation type="journal article" date="2008" name="BMC Microbiol.">
        <title>EndoS from Streptococcus pyogenes is hydrolyzed by the cysteine proteinase SpeB and requires glutamic acid 235 and tryptophans for IgG glycan-hydrolyzing activity.</title>
        <authorList>
            <person name="Allhorn M."/>
            <person name="Olsen A."/>
            <person name="Collin M."/>
        </authorList>
    </citation>
    <scope>PROTEIN SEQUENCE OF 446-453</scope>
    <scope>FUNCTION</scope>
    <scope>CATALYTIC ACTIVITY</scope>
    <scope>SUBCELLULAR LOCATION</scope>
    <scope>PROTEOLYTIC CLEAVAGE</scope>
    <scope>ACTIVE SITE</scope>
    <scope>MUTAGENESIS OF GLU-235</scope>
</reference>
<reference key="4">
    <citation type="journal article" date="2001" name="Infect. Immun.">
        <title>Effect of SpeB and EndoS from Streptococcus pyogenes on human immunoglobulins.</title>
        <authorList>
            <person name="Collin M."/>
            <person name="Olsen A."/>
        </authorList>
    </citation>
    <scope>FUNCTION</scope>
</reference>
<reference key="5">
    <citation type="journal article" date="2002" name="Infect. Immun.">
        <title>EndoS and SpeB from Streptococcus pyogenes inhibit immunoglobulin-mediated opsonophagocytosis.</title>
        <authorList>
            <person name="Collin M."/>
            <person name="Svensson M.D."/>
            <person name="Sjoeholm A.G."/>
            <person name="Jensenius J.C."/>
            <person name="Sjoebring U."/>
            <person name="Olsen A."/>
        </authorList>
    </citation>
    <scope>FUNCTION</scope>
</reference>
<reference key="6">
    <citation type="journal article" date="2008" name="Proc. Natl. Acad. Sci. U.S.A.">
        <title>In vivo enzymatic modulation of IgG glycosylation inhibits autoimmune disease in an IgG subclass-dependent manner.</title>
        <authorList>
            <person name="Albert H."/>
            <person name="Collin M."/>
            <person name="Dudziak D."/>
            <person name="Ravetch J.V."/>
            <person name="Nimmerjahn F."/>
        </authorList>
    </citation>
    <scope>BIOTECHNOLOGY</scope>
</reference>
<reference key="7">
    <citation type="journal article" date="2010" name="Blood">
        <title>The IgG-specific endoglycosidase EndoS inhibits both cellular and complement-mediated autoimmune hemolysis.</title>
        <authorList>
            <person name="Allhorn M."/>
            <person name="Briceno J.G."/>
            <person name="Baudino L."/>
            <person name="Lood C."/>
            <person name="Olsson M.L."/>
            <person name="Izui S."/>
            <person name="Collin M."/>
        </authorList>
    </citation>
    <scope>FUNCTION</scope>
</reference>
<reference key="8">
    <citation type="journal article" date="2011" name="BMC Microbiol.">
        <title>Study of the IgG endoglycosidase EndoS in group A streptococcal phagocyte resistance and virulence.</title>
        <authorList>
            <person name="Sjoegren J."/>
            <person name="Okumura C.Y."/>
            <person name="Collin M."/>
            <person name="Nizet V."/>
            <person name="Hollands A."/>
        </authorList>
    </citation>
    <scope>FUNCTION</scope>
</reference>
<reference key="9">
    <citation type="journal article" date="2012" name="J. Am. Chem. Soc.">
        <title>An endoglycosidase with alternative glycan specificity allows broadened glycoprotein remodelling.</title>
        <authorList>
            <person name="Goodfellow J.J."/>
            <person name="Baruah K."/>
            <person name="Yamamoto K."/>
            <person name="Bonomelli C."/>
            <person name="Krishna B."/>
            <person name="Harvey D.J."/>
            <person name="Crispin M."/>
            <person name="Scanlan C.N."/>
            <person name="Davis B.G."/>
        </authorList>
    </citation>
    <scope>FUNCTION</scope>
    <scope>CATALYTIC ACTIVITY</scope>
</reference>
<reference key="10">
    <citation type="journal article" date="2012" name="J. Am. Chem. Soc.">
        <title>Chemoenzymatic glycoengineering of intact IgG antibodies for gain of functions.</title>
        <authorList>
            <person name="Huang W."/>
            <person name="Giddens J."/>
            <person name="Fan S.Q."/>
            <person name="Toonstra C."/>
            <person name="Wang L.X."/>
        </authorList>
    </citation>
    <scope>FUNCTION</scope>
    <scope>CATALYTIC ACTIVITY</scope>
    <scope>MUTAGENESIS OF ASP-233</scope>
</reference>
<reference key="11">
    <citation type="journal article" date="2018" name="Biochemistry">
        <title>Generation and Comparative Kinetic Analysis of New Glycosynthase Mutants from Streptococcus pyogenes Endoglycosidases for Antibody Glycoengineering.</title>
        <authorList>
            <person name="Tong X."/>
            <person name="Li T."/>
            <person name="Li C."/>
            <person name="Wang L.X."/>
        </authorList>
    </citation>
    <scope>FUNCTION</scope>
    <scope>CATALYTIC ACTIVITY</scope>
    <scope>MUTAGENESIS OF ASP-233</scope>
</reference>
<reference key="12">
    <citation type="journal article" date="2019" name="J. Exp. Med.">
        <title>Streptococcus pyogenes evades adaptive immunity through specific IgG glycan hydrolysis.</title>
        <authorList>
            <person name="Naegeli A."/>
            <person name="Bratanis E."/>
            <person name="Karlsson C."/>
            <person name="Shannon O."/>
            <person name="Kalluru R."/>
            <person name="Linder A."/>
            <person name="Malmstroem J."/>
            <person name="Collin M."/>
        </authorList>
    </citation>
    <scope>FUNCTION</scope>
    <scope>DISRUPTION PHENOTYPE</scope>
</reference>
<reference key="13">
    <citation type="journal article" date="2013" name="Acta Crystallogr. F">
        <title>Liquid-liquid diffusion crystallization improves the X-ray diffraction of EndoS, an endo-beta-N-acetylglucosaminidase from Streptococcus pyogenes with activity on human IgG.</title>
        <authorList>
            <person name="Trastoy B."/>
            <person name="Lomino J.V."/>
            <person name="Wang L.X."/>
            <person name="Sundberg E.J."/>
        </authorList>
    </citation>
    <scope>CRYSTALLIZATION</scope>
</reference>
<reference key="14">
    <citation type="journal article" date="2014" name="J. Biol. Chem.">
        <title>Fragments of bacterial endoglycosidase s and immunoglobulin g reveal subdomains of each that contribute to deglycosylation.</title>
        <authorList>
            <person name="Dixon E.V."/>
            <person name="Claridge J.K."/>
            <person name="Harvey D.J."/>
            <person name="Baruah K."/>
            <person name="Yu X."/>
            <person name="Vesiljevic S."/>
            <person name="Mattick S."/>
            <person name="Pritchard L.K."/>
            <person name="Krishna B."/>
            <person name="Scanlan C.N."/>
            <person name="Schnell J.R."/>
            <person name="Higgins M.K."/>
            <person name="Zitzmann N."/>
            <person name="Crispin M."/>
        </authorList>
    </citation>
    <scope>FUNCTION</scope>
    <scope>CATALYTIC ACTIVITY</scope>
    <scope>MUTAGENESIS OF 925-PRO--LYS-995</scope>
</reference>
<reference key="15">
    <citation type="journal article" date="2014" name="Proc. Natl. Acad. Sci. U.S.A.">
        <title>Crystal structure of Streptococcus pyogenes EndoS, an immunomodulatory endoglycosidase specific for human IgG antibodies.</title>
        <authorList>
            <person name="Trastoy B."/>
            <person name="Lomino J.V."/>
            <person name="Pierce B.G."/>
            <person name="Carter L.G."/>
            <person name="Guenther S."/>
            <person name="Giddens J.P."/>
            <person name="Snyder G.A."/>
            <person name="Weiss T.M."/>
            <person name="Weng Z."/>
            <person name="Wang L.X."/>
            <person name="Sundberg E.J."/>
        </authorList>
    </citation>
    <scope>X-RAY CRYSTALLOGRAPHY (1.91 ANGSTROMS) OF 98-995 OF MUTANT GLN-233 IN COMPLEX WITH CALCIUM</scope>
    <scope>FUNCTION</scope>
    <scope>MUTAGENESIS OF GLU-235; TRP-803 AND GLU-833</scope>
</reference>
<reference key="16">
    <citation type="journal article" date="2015" name="Glycobiology">
        <title>EndoS and EndoS2 hydrolyze Fc-glycans on therapeutic antibodies with different glycoform selectivity and can be used for rapid quantification of high-mannose glycans.</title>
        <authorList>
            <person name="Sjoegren J."/>
            <person name="Cosgrave E.F."/>
            <person name="Allhorn M."/>
            <person name="Nordgren M."/>
            <person name="Bjoerk S."/>
            <person name="Olsson F."/>
            <person name="Fredriksson S."/>
            <person name="Collin M."/>
        </authorList>
    </citation>
    <scope>FUNCTION</scope>
    <scope>CATALYTIC ACTIVITY</scope>
</reference>
<reference evidence="27" key="17">
    <citation type="journal article" date="2018" name="Nat. Commun.">
        <title>Structural basis for the recognition of complex-type N-glycans by Endoglycosidase S.</title>
        <authorList>
            <person name="Trastoy B."/>
            <person name="Klontz E."/>
            <person name="Orwenyo J."/>
            <person name="Marina A."/>
            <person name="Wang L.X."/>
            <person name="Sundberg E.J."/>
            <person name="Guerin M.E."/>
        </authorList>
    </citation>
    <scope>X-RAY CRYSTALLOGRAPHY (2.90 ANGSTROMS) OF 37-995 OF MUTANT GLN-233 AND LEU-235 IN COMPLEX WITH CALCIUM AND OLIGOSACCHARIDE</scope>
    <scope>FUNCTION</scope>
    <scope>CATALYTIC ACTIVITY</scope>
    <scope>MUTAGENESIS OF ARG-119; 130-GLU--LYS-133; TRP-153; 186-ARG--ASN-193; 237-ASP--LYS-241; 303-GLN--TYR-305 AND 346-SER--GLU-354</scope>
</reference>
<organism>
    <name type="scientific">Streptococcus pyogenes serotype M1</name>
    <dbReference type="NCBI Taxonomy" id="301447"/>
    <lineage>
        <taxon>Bacteria</taxon>
        <taxon>Bacillati</taxon>
        <taxon>Bacillota</taxon>
        <taxon>Bacilli</taxon>
        <taxon>Lactobacillales</taxon>
        <taxon>Streptococcaceae</taxon>
        <taxon>Streptococcus</taxon>
    </lineage>
</organism>
<gene>
    <name evidence="19" type="primary">endoS</name>
    <name evidence="24" type="ordered locus">SPy_1813</name>
</gene>
<comment type="function">
    <text evidence="4 5 6 7 9 10 11 12 13 14 15 16 17 18">Endoglucosidase that acts as a host immune evasion factor by mediating hydrolysis of the N-linked glycan from the Fc region of host immunoglobulin-gamma (IgG) during infection (PubMed:11406581, PubMed:11598100, PubMed:12438337, PubMed:18182097, PubMed:20357243, PubMed:21619648, PubMed:22551167, PubMed:22747414, PubMed:24668806, PubMed:24753590, PubMed:29760474, PubMed:30102520, PubMed:31092533). Specifically catalyzes the hydrolysis of the beta-1,4 linkage between the first two N-acetylglucosamine residues of the complex-type N-linked glycan located on 'Asn-297' of the Fc region of IgG antibodies (IGHG1, IGHG2, IGHG3 or IGHG4), thereby preventing interaction between IgGs and Fc receptors and ability to activate the complement pathway (PubMed:11406581, PubMed:11598100, PubMed:12438337, PubMed:20357243, PubMed:21619648, PubMed:31092533). Shows a specificity for biantennary complex type N-glycans; does neither cleave larger complex type glycans nor oligomannose and nor hybrid-type glycans (PubMed:22551167, PubMed:26156869). Specifically acts on IgGs; does not act on immunoglobulin alpha, beta, delta or mu (PubMed:11598100).</text>
</comment>
<comment type="catalytic activity">
    <reaction evidence="4 7 11 12 13 15 16 17">
        <text>an N(4)-(oligosaccharide-(1-&gt;3)-[oligosaccharide-(1-&gt;6)]-beta-D-Man-(1-&gt;4)-beta-D-GlcNAc-(1-&gt;4)-alpha-D-GlcNAc)-L-asparaginyl-[protein] + H2O = an oligosaccharide-(1-&gt;3)-[oligosaccharide-(1-&gt;6)]-beta-D-Man-(1-&gt;4)-D-GlcNAc + N(4)-(N-acetyl-beta-D-glucosaminyl)-L-asparaginyl-[protein]</text>
        <dbReference type="Rhea" id="RHEA:73067"/>
        <dbReference type="Rhea" id="RHEA-COMP:12603"/>
        <dbReference type="Rhea" id="RHEA-COMP:18176"/>
        <dbReference type="ChEBI" id="CHEBI:15377"/>
        <dbReference type="ChEBI" id="CHEBI:132248"/>
        <dbReference type="ChEBI" id="CHEBI:192714"/>
        <dbReference type="ChEBI" id="CHEBI:192715"/>
        <dbReference type="EC" id="3.2.1.96"/>
    </reaction>
</comment>
<comment type="subcellular location">
    <subcellularLocation>
        <location evidence="4 7">Secreted</location>
    </subcellularLocation>
    <subcellularLocation>
        <location evidence="4 7">Host extracellular space</location>
    </subcellularLocation>
</comment>
<comment type="PTM">
    <text evidence="7">Cleaved by SpeB protease; leading to loss of endoglucosidase activity (PubMed:18182097). EndoS is produced and secreted prior to SpeB, suggesting that it is degraded after acting as a host immune evasion factor (PubMed:18182097).</text>
</comment>
<comment type="disruption phenotype">
    <text evidence="18">Decreased virulence in a mouse model of invasive infection.</text>
</comment>
<comment type="biotechnology">
    <text evidence="8">The role played by EndoS in the specific inhibition of host immunoglobulin-gamma (IgG)-mediated immune response makes it a promising candidate for the treatment of some autoimmune disease.</text>
</comment>
<comment type="similarity">
    <text evidence="20">Belongs to the glycosyl hydrolase 18 family.</text>
</comment>
<protein>
    <recommendedName>
        <fullName evidence="20">Endo-beta-N-acetylglucosaminidase EndoS</fullName>
        <ecNumber evidence="4 7 13 16">3.2.1.96</ecNumber>
    </recommendedName>
    <alternativeName>
        <fullName evidence="19">Endoglycosidase S</fullName>
    </alternativeName>
</protein>
<feature type="signal peptide" evidence="1">
    <location>
        <begin position="1"/>
        <end position="36"/>
    </location>
</feature>
<feature type="chain" id="PRO_5004322872" description="Endo-beta-N-acetylglucosaminidase EndoS" evidence="1">
    <location>
        <begin position="37"/>
        <end position="995"/>
    </location>
</feature>
<feature type="domain" description="GH18" evidence="2">
    <location>
        <begin position="112"/>
        <end position="432"/>
    </location>
</feature>
<feature type="repeat" description="LRR 1" evidence="1">
    <location>
        <begin position="437"/>
        <end position="460"/>
    </location>
</feature>
<feature type="repeat" description="LRR 2" evidence="1">
    <location>
        <begin position="478"/>
        <end position="503"/>
    </location>
</feature>
<feature type="repeat" description="LRR 3" evidence="1">
    <location>
        <begin position="562"/>
        <end position="585"/>
    </location>
</feature>
<feature type="repeat" description="LRR 4" evidence="1">
    <location>
        <begin position="586"/>
        <end position="609"/>
    </location>
</feature>
<feature type="region of interest" description="carbohydrate-binding module (CBM)" evidence="22 23">
    <location>
        <begin position="765"/>
        <end position="923"/>
    </location>
</feature>
<feature type="region of interest" description="Three-helix bundle (3H)" evidence="22 23">
    <location>
        <begin position="924"/>
        <end position="995"/>
    </location>
</feature>
<feature type="active site" description="Proton donor" evidence="3 21">
    <location>
        <position position="235"/>
    </location>
</feature>
<feature type="binding site" evidence="16 27">
    <location>
        <position position="151"/>
    </location>
    <ligand>
        <name>a glycoprotein</name>
        <dbReference type="ChEBI" id="CHEBI:17089"/>
    </ligand>
</feature>
<feature type="binding site" evidence="16 27">
    <location>
        <position position="153"/>
    </location>
    <ligand>
        <name>a glycoprotein</name>
        <dbReference type="ChEBI" id="CHEBI:17089"/>
    </ligand>
</feature>
<feature type="binding site" evidence="16 27">
    <location>
        <position position="186"/>
    </location>
    <ligand>
        <name>a glycoprotein</name>
        <dbReference type="ChEBI" id="CHEBI:17089"/>
    </ligand>
</feature>
<feature type="binding site" evidence="16 27">
    <location>
        <position position="237"/>
    </location>
    <ligand>
        <name>a glycoprotein</name>
        <dbReference type="ChEBI" id="CHEBI:17089"/>
    </ligand>
</feature>
<feature type="binding site" evidence="16 27">
    <location>
        <position position="303"/>
    </location>
    <ligand>
        <name>a glycoprotein</name>
        <dbReference type="ChEBI" id="CHEBI:17089"/>
    </ligand>
</feature>
<feature type="binding site" evidence="16 27">
    <location>
        <position position="305"/>
    </location>
    <ligand>
        <name>a glycoprotein</name>
        <dbReference type="ChEBI" id="CHEBI:17089"/>
    </ligand>
</feature>
<feature type="binding site" evidence="16 27">
    <location>
        <position position="349"/>
    </location>
    <ligand>
        <name>a glycoprotein</name>
        <dbReference type="ChEBI" id="CHEBI:17089"/>
    </ligand>
</feature>
<feature type="binding site" evidence="16 27">
    <location>
        <position position="350"/>
    </location>
    <ligand>
        <name>a glycoprotein</name>
        <dbReference type="ChEBI" id="CHEBI:17089"/>
    </ligand>
</feature>
<feature type="binding site" evidence="16 27">
    <location>
        <position position="356"/>
    </location>
    <ligand>
        <name>a glycoprotein</name>
        <dbReference type="ChEBI" id="CHEBI:17089"/>
    </ligand>
</feature>
<feature type="binding site" evidence="16 27">
    <location>
        <position position="402"/>
    </location>
    <ligand>
        <name>a glycoprotein</name>
        <dbReference type="ChEBI" id="CHEBI:17089"/>
    </ligand>
</feature>
<feature type="binding site" evidence="14 16 25 26 27">
    <location>
        <position position="786"/>
    </location>
    <ligand>
        <name>Ca(2+)</name>
        <dbReference type="ChEBI" id="CHEBI:29108"/>
    </ligand>
</feature>
<feature type="binding site" evidence="14 16 25 26 27">
    <location>
        <position position="789"/>
    </location>
    <ligand>
        <name>Ca(2+)</name>
        <dbReference type="ChEBI" id="CHEBI:29108"/>
    </ligand>
</feature>
<feature type="binding site" evidence="14 16 25 26 27">
    <location>
        <position position="791"/>
    </location>
    <ligand>
        <name>Ca(2+)</name>
        <dbReference type="ChEBI" id="CHEBI:29108"/>
    </ligand>
</feature>
<feature type="binding site" evidence="14 16 25 26 27">
    <location>
        <position position="915"/>
    </location>
    <ligand>
        <name>Ca(2+)</name>
        <dbReference type="ChEBI" id="CHEBI:29108"/>
    </ligand>
</feature>
<feature type="binding site" evidence="14 26">
    <location>
        <position position="916"/>
    </location>
    <ligand>
        <name>Ca(2+)</name>
        <dbReference type="ChEBI" id="CHEBI:29108"/>
    </ligand>
</feature>
<feature type="site" description="Cleavage; by S.pyogenes SpeB" evidence="7">
    <location>
        <begin position="445"/>
        <end position="446"/>
    </location>
</feature>
<feature type="mutagenesis site" description="In loop 1 mutant; abolished endoglucosidase activity; when associated with 130-A--A-133." evidence="16">
    <original>R</original>
    <variation>A</variation>
    <location>
        <position position="119"/>
    </location>
</feature>
<feature type="mutagenesis site" description="In loop 1 mutant; abolished endoglucosidase activity; when associated with A-119." evidence="16">
    <original>EKDK</original>
    <variation>AKDA</variation>
    <location>
        <begin position="130"/>
        <end position="133"/>
    </location>
</feature>
<feature type="mutagenesis site" description="In loop 2 mutant; strongly decreased endoglucosidase activity." evidence="16">
    <original>W</original>
    <variation>A</variation>
    <location>
        <position position="153"/>
    </location>
</feature>
<feature type="mutagenesis site" description="In loop 3 mutant; strongly decreased endoglucosidase activity." evidence="16">
    <original>RFLAGGDN</original>
    <variation>AFLAGGDA</variation>
    <location>
        <begin position="186"/>
        <end position="193"/>
    </location>
</feature>
<feature type="mutagenesis site" description="Abolished endoglucosidase activity, while promoting transglycosylation. Able to efficiently transfer predefined N-glycans from corresponding glycan oxazolines to the Fc-deglycosylated intact IgGs without product hydrolysis." evidence="12 17">
    <original>D</original>
    <variation>A</variation>
    <variation>Q</variation>
    <variation>E</variation>
    <variation>G</variation>
    <variation>N</variation>
    <variation>S</variation>
    <location>
        <position position="233"/>
    </location>
</feature>
<feature type="mutagenesis site" description="Retains some endoglucosidase activity, has a strong ability to mediate transglycosylation. Able to efficiently transfer predefined N-glycans from corresponding glycan oxazolines to the Fc-deglycosylated intact IgGs without product hydrolysis." evidence="17">
    <original>D</original>
    <variation>C</variation>
    <location>
        <position position="233"/>
    </location>
</feature>
<feature type="mutagenesis site" description="Abolished endoglucosidase activity." evidence="17">
    <original>D</original>
    <variation>F</variation>
    <variation>H</variation>
    <variation>K</variation>
    <variation>R</variation>
    <variation>L</variation>
    <variation>P</variation>
    <variation>W</variation>
    <variation>Y</variation>
    <location>
        <position position="233"/>
    </location>
</feature>
<feature type="mutagenesis site" description="Abolished endoglucosidase activity, while gaining a strong ability to mediate transglycosylation. Able to efficiently transfer predefined N-glycans from corresponding glycan oxazolines to the Fc-deglycosylated intact IgGs without product hydrolysis." evidence="17">
    <original>D</original>
    <variation>M</variation>
    <location>
        <position position="233"/>
    </location>
</feature>
<feature type="mutagenesis site" description="Abolished endoglucosidase activity. Abolished endoglucosidase activity and ability to bind immunoglobulin-G (IgG); when associated with A-803 or A-833." evidence="7 14">
    <original>E</original>
    <variation>Q</variation>
    <location>
        <position position="235"/>
    </location>
</feature>
<feature type="mutagenesis site" description="In loop 4 mutant; slightly decreased endoglucosidase activity." evidence="16">
    <original>DSIPK</original>
    <variation>ASIPA</variation>
    <location>
        <begin position="237"/>
        <end position="241"/>
    </location>
</feature>
<feature type="mutagenesis site" description="In loop 6 mutant; abolished endoglucosidase activity." evidence="16">
    <original>QVY</original>
    <variation>AVA</variation>
    <location>
        <begin position="303"/>
        <end position="305"/>
    </location>
</feature>
<feature type="mutagenesis site" description="In loop 7 mutant; abolished endoglucosidase activity." evidence="16">
    <original>SFYEENAQE</original>
    <variation>AFYAANAQA</variation>
    <location>
        <begin position="346"/>
        <end position="354"/>
    </location>
</feature>
<feature type="mutagenesis site" description="Abolished endoglucosidase activity and ability to bind immunoglobulin-G (IgG); when associated with Q-235." evidence="14">
    <original>W</original>
    <variation>A</variation>
    <location>
        <position position="803"/>
    </location>
</feature>
<feature type="mutagenesis site" description="Abolished endoglucosidase activity and ability to bind immunoglobulin-G (IgG); when associated with Q-235." evidence="14">
    <original>E</original>
    <variation>A</variation>
    <location>
        <position position="833"/>
    </location>
</feature>
<feature type="mutagenesis site" description="Abolished endoglucosidase activity." evidence="13">
    <location>
        <begin position="925"/>
        <end position="995"/>
    </location>
</feature>
<feature type="sequence conflict" description="In Ref. 1; AAK00850." evidence="20" ref="1">
    <original>S</original>
    <variation>P</variation>
    <location>
        <position position="112"/>
    </location>
</feature>
<feature type="strand" evidence="28">
    <location>
        <begin position="111"/>
        <end position="119"/>
    </location>
</feature>
<feature type="helix" evidence="28">
    <location>
        <begin position="120"/>
        <end position="122"/>
    </location>
</feature>
<feature type="turn" evidence="28">
    <location>
        <begin position="124"/>
        <end position="126"/>
    </location>
</feature>
<feature type="helix" evidence="28">
    <location>
        <begin position="137"/>
        <end position="139"/>
    </location>
</feature>
<feature type="strand" evidence="28">
    <location>
        <begin position="145"/>
        <end position="150"/>
    </location>
</feature>
<feature type="helix" evidence="28">
    <location>
        <begin position="158"/>
        <end position="166"/>
    </location>
</feature>
<feature type="helix" evidence="28">
    <location>
        <begin position="168"/>
        <end position="174"/>
    </location>
</feature>
<feature type="strand" evidence="28">
    <location>
        <begin position="178"/>
        <end position="184"/>
    </location>
</feature>
<feature type="helix" evidence="28">
    <location>
        <begin position="185"/>
        <end position="188"/>
    </location>
</feature>
<feature type="helix" evidence="28">
    <location>
        <begin position="195"/>
        <end position="198"/>
    </location>
</feature>
<feature type="turn" evidence="28">
    <location>
        <begin position="200"/>
        <end position="202"/>
    </location>
</feature>
<feature type="helix" evidence="28">
    <location>
        <begin position="207"/>
        <end position="221"/>
    </location>
</feature>
<feature type="turn" evidence="28">
    <location>
        <begin position="222"/>
        <end position="226"/>
    </location>
</feature>
<feature type="strand" evidence="28">
    <location>
        <begin position="228"/>
        <end position="235"/>
    </location>
</feature>
<feature type="helix" evidence="28">
    <location>
        <begin position="236"/>
        <end position="238"/>
    </location>
</feature>
<feature type="strand" evidence="29">
    <location>
        <begin position="241"/>
        <end position="246"/>
    </location>
</feature>
<feature type="helix" evidence="28">
    <location>
        <begin position="248"/>
        <end position="262"/>
    </location>
</feature>
<feature type="strand" evidence="28">
    <location>
        <begin position="269"/>
        <end position="271"/>
    </location>
</feature>
<feature type="strand" evidence="28">
    <location>
        <begin position="274"/>
        <end position="282"/>
    </location>
</feature>
<feature type="helix" evidence="28">
    <location>
        <begin position="284"/>
        <end position="286"/>
    </location>
</feature>
<feature type="helix" evidence="28">
    <location>
        <begin position="290"/>
        <end position="293"/>
    </location>
</feature>
<feature type="helix" evidence="28">
    <location>
        <begin position="294"/>
        <end position="296"/>
    </location>
</feature>
<feature type="strand" evidence="28">
    <location>
        <begin position="298"/>
        <end position="303"/>
    </location>
</feature>
<feature type="helix" evidence="28">
    <location>
        <begin position="306"/>
        <end position="310"/>
    </location>
</feature>
<feature type="strand" evidence="28">
    <location>
        <begin position="313"/>
        <end position="315"/>
    </location>
</feature>
<feature type="turn" evidence="28">
    <location>
        <begin position="316"/>
        <end position="319"/>
    </location>
</feature>
<feature type="strand" evidence="28">
    <location>
        <begin position="320"/>
        <end position="323"/>
    </location>
</feature>
<feature type="helix" evidence="28">
    <location>
        <begin position="325"/>
        <end position="332"/>
    </location>
</feature>
<feature type="turn" evidence="28">
    <location>
        <begin position="333"/>
        <end position="335"/>
    </location>
</feature>
<feature type="helix" evidence="28">
    <location>
        <begin position="338"/>
        <end position="340"/>
    </location>
</feature>
<feature type="strand" evidence="28">
    <location>
        <begin position="341"/>
        <end position="346"/>
    </location>
</feature>
<feature type="helix" evidence="28">
    <location>
        <begin position="381"/>
        <end position="387"/>
    </location>
</feature>
<feature type="strand" evidence="28">
    <location>
        <begin position="391"/>
        <end position="393"/>
    </location>
</feature>
<feature type="strand" evidence="28">
    <location>
        <begin position="398"/>
        <end position="402"/>
    </location>
</feature>
<feature type="helix" evidence="28">
    <location>
        <begin position="404"/>
        <end position="406"/>
    </location>
</feature>
<feature type="helix" evidence="28">
    <location>
        <begin position="414"/>
        <end position="416"/>
    </location>
</feature>
<feature type="helix" evidence="29">
    <location>
        <begin position="425"/>
        <end position="427"/>
    </location>
</feature>
<feature type="helix" evidence="28">
    <location>
        <begin position="435"/>
        <end position="445"/>
    </location>
</feature>
<feature type="helix" evidence="28">
    <location>
        <begin position="448"/>
        <end position="450"/>
    </location>
</feature>
<feature type="turn" evidence="28">
    <location>
        <begin position="455"/>
        <end position="457"/>
    </location>
</feature>
<feature type="helix" evidence="28">
    <location>
        <begin position="461"/>
        <end position="470"/>
    </location>
</feature>
<feature type="helix" evidence="28">
    <location>
        <begin position="475"/>
        <end position="478"/>
    </location>
</feature>
<feature type="strand" evidence="28">
    <location>
        <begin position="483"/>
        <end position="487"/>
    </location>
</feature>
<feature type="helix" evidence="28">
    <location>
        <begin position="498"/>
        <end position="500"/>
    </location>
</feature>
<feature type="strand" evidence="28">
    <location>
        <begin position="506"/>
        <end position="511"/>
    </location>
</feature>
<feature type="helix" evidence="28">
    <location>
        <begin position="520"/>
        <end position="522"/>
    </location>
</feature>
<feature type="helix" evidence="28">
    <location>
        <begin position="525"/>
        <end position="527"/>
    </location>
</feature>
<feature type="strand" evidence="28">
    <location>
        <begin position="556"/>
        <end position="560"/>
    </location>
</feature>
<feature type="strand" evidence="28">
    <location>
        <begin position="567"/>
        <end position="569"/>
    </location>
</feature>
<feature type="helix" evidence="28">
    <location>
        <begin position="583"/>
        <end position="585"/>
    </location>
</feature>
<feature type="strand" evidence="28">
    <location>
        <begin position="591"/>
        <end position="593"/>
    </location>
</feature>
<feature type="helix" evidence="28">
    <location>
        <begin position="606"/>
        <end position="621"/>
    </location>
</feature>
<feature type="turn" evidence="28">
    <location>
        <begin position="626"/>
        <end position="628"/>
    </location>
</feature>
<feature type="strand" evidence="28">
    <location>
        <begin position="648"/>
        <end position="651"/>
    </location>
</feature>
<feature type="strand" evidence="28">
    <location>
        <begin position="657"/>
        <end position="659"/>
    </location>
</feature>
<feature type="helix" evidence="28">
    <location>
        <begin position="660"/>
        <end position="664"/>
    </location>
</feature>
<feature type="helix" evidence="28">
    <location>
        <begin position="679"/>
        <end position="686"/>
    </location>
</feature>
<feature type="strand" evidence="28">
    <location>
        <begin position="693"/>
        <end position="696"/>
    </location>
</feature>
<feature type="strand" evidence="29">
    <location>
        <begin position="698"/>
        <end position="700"/>
    </location>
</feature>
<feature type="helix" evidence="28">
    <location>
        <begin position="702"/>
        <end position="705"/>
    </location>
</feature>
<feature type="strand" evidence="28">
    <location>
        <begin position="713"/>
        <end position="718"/>
    </location>
</feature>
<feature type="strand" evidence="28">
    <location>
        <begin position="727"/>
        <end position="730"/>
    </location>
</feature>
<feature type="strand" evidence="28">
    <location>
        <begin position="735"/>
        <end position="742"/>
    </location>
</feature>
<feature type="strand" evidence="28">
    <location>
        <begin position="749"/>
        <end position="760"/>
    </location>
</feature>
<feature type="turn" evidence="28">
    <location>
        <begin position="768"/>
        <end position="771"/>
    </location>
</feature>
<feature type="strand" evidence="28">
    <location>
        <begin position="773"/>
        <end position="779"/>
    </location>
</feature>
<feature type="helix" evidence="28">
    <location>
        <begin position="781"/>
        <end position="784"/>
    </location>
</feature>
<feature type="helix" evidence="28">
    <location>
        <begin position="785"/>
        <end position="788"/>
    </location>
</feature>
<feature type="strand" evidence="28">
    <location>
        <begin position="789"/>
        <end position="791"/>
    </location>
</feature>
<feature type="strand" evidence="28">
    <location>
        <begin position="803"/>
        <end position="812"/>
    </location>
</feature>
<feature type="strand" evidence="28">
    <location>
        <begin position="817"/>
        <end position="825"/>
    </location>
</feature>
<feature type="helix" evidence="28">
    <location>
        <begin position="827"/>
        <end position="829"/>
    </location>
</feature>
<feature type="strand" evidence="28">
    <location>
        <begin position="841"/>
        <end position="847"/>
    </location>
</feature>
<feature type="turn" evidence="28">
    <location>
        <begin position="849"/>
        <end position="851"/>
    </location>
</feature>
<feature type="helix" evidence="28">
    <location>
        <begin position="854"/>
        <end position="859"/>
    </location>
</feature>
<feature type="helix" evidence="28">
    <location>
        <begin position="861"/>
        <end position="863"/>
    </location>
</feature>
<feature type="helix" evidence="28">
    <location>
        <begin position="867"/>
        <end position="869"/>
    </location>
</feature>
<feature type="strand" evidence="28">
    <location>
        <begin position="870"/>
        <end position="877"/>
    </location>
</feature>
<feature type="strand" evidence="28">
    <location>
        <begin position="884"/>
        <end position="893"/>
    </location>
</feature>
<feature type="strand" evidence="28">
    <location>
        <begin position="896"/>
        <end position="903"/>
    </location>
</feature>
<feature type="strand" evidence="29">
    <location>
        <begin position="907"/>
        <end position="909"/>
    </location>
</feature>
<feature type="strand" evidence="28">
    <location>
        <begin position="917"/>
        <end position="923"/>
    </location>
</feature>
<feature type="helix" evidence="28">
    <location>
        <begin position="927"/>
        <end position="941"/>
    </location>
</feature>
<feature type="turn" evidence="28">
    <location>
        <begin position="944"/>
        <end position="946"/>
    </location>
</feature>
<feature type="helix" evidence="28">
    <location>
        <begin position="949"/>
        <end position="966"/>
    </location>
</feature>
<feature type="helix" evidence="28">
    <location>
        <begin position="973"/>
        <end position="986"/>
    </location>
</feature>
<keyword id="KW-0002">3D-structure</keyword>
<keyword id="KW-0106">Calcium</keyword>
<keyword id="KW-0903">Direct protein sequencing</keyword>
<keyword id="KW-0326">Glycosidase</keyword>
<keyword id="KW-0378">Hydrolase</keyword>
<keyword id="KW-0433">Leucine-rich repeat</keyword>
<keyword id="KW-0479">Metal-binding</keyword>
<keyword id="KW-1185">Reference proteome</keyword>
<keyword id="KW-0677">Repeat</keyword>
<keyword id="KW-0964">Secreted</keyword>
<keyword id="KW-0732">Signal</keyword>
<keyword id="KW-0843">Virulence</keyword>
<name>ENDOS_STRP1</name>